<feature type="chain" id="PRO_0000196318" description="Protein SspF">
    <location>
        <begin position="1"/>
        <end position="61"/>
    </location>
</feature>
<feature type="site" description="Cleavage; by spore protease" evidence="1">
    <location>
        <begin position="15"/>
        <end position="16"/>
    </location>
</feature>
<proteinExistence type="inferred from homology"/>
<gene>
    <name type="primary">sspF</name>
    <name type="ordered locus">BSU00450</name>
</gene>
<accession>P37549</accession>
<dbReference type="EMBL" id="X00847">
    <property type="protein sequence ID" value="CAA25403.1"/>
    <property type="molecule type" value="Genomic_DNA"/>
</dbReference>
<dbReference type="EMBL" id="D26185">
    <property type="protein sequence ID" value="BAA05280.1"/>
    <property type="molecule type" value="Genomic_DNA"/>
</dbReference>
<dbReference type="EMBL" id="AL009126">
    <property type="protein sequence ID" value="CAB11821.1"/>
    <property type="molecule type" value="Genomic_DNA"/>
</dbReference>
<dbReference type="PIR" id="I40472">
    <property type="entry name" value="I40472"/>
</dbReference>
<dbReference type="RefSeq" id="NP_387926.1">
    <property type="nucleotide sequence ID" value="NC_000964.3"/>
</dbReference>
<dbReference type="RefSeq" id="WP_003218333.1">
    <property type="nucleotide sequence ID" value="NZ_OZ025638.1"/>
</dbReference>
<dbReference type="SMR" id="P37549"/>
<dbReference type="FunCoup" id="P37549">
    <property type="interactions" value="156"/>
</dbReference>
<dbReference type="STRING" id="224308.BSU00450"/>
<dbReference type="PaxDb" id="224308-BSU00450"/>
<dbReference type="EnsemblBacteria" id="CAB11821">
    <property type="protein sequence ID" value="CAB11821"/>
    <property type="gene ID" value="BSU_00450"/>
</dbReference>
<dbReference type="GeneID" id="936996"/>
<dbReference type="KEGG" id="bsu:BSU00450"/>
<dbReference type="PATRIC" id="fig|224308.179.peg.45"/>
<dbReference type="eggNOG" id="ENOG5032Y0E">
    <property type="taxonomic scope" value="Bacteria"/>
</dbReference>
<dbReference type="InParanoid" id="P37549"/>
<dbReference type="OrthoDB" id="1684060at2"/>
<dbReference type="BioCyc" id="BSUB:BSU00450-MONOMER"/>
<dbReference type="PRO" id="PR:P37549"/>
<dbReference type="Proteomes" id="UP000001570">
    <property type="component" value="Chromosome"/>
</dbReference>
<dbReference type="GO" id="GO:0003690">
    <property type="term" value="F:double-stranded DNA binding"/>
    <property type="evidence" value="ECO:0007669"/>
    <property type="project" value="InterPro"/>
</dbReference>
<dbReference type="GO" id="GO:0006265">
    <property type="term" value="P:DNA topological change"/>
    <property type="evidence" value="ECO:0007669"/>
    <property type="project" value="InterPro"/>
</dbReference>
<dbReference type="GO" id="GO:0030435">
    <property type="term" value="P:sporulation resulting in formation of a cellular spore"/>
    <property type="evidence" value="ECO:0007669"/>
    <property type="project" value="UniProtKB-KW"/>
</dbReference>
<dbReference type="Gene3D" id="6.10.10.80">
    <property type="entry name" value="Small, acid-soluble spore protein, alpha/beta type-like"/>
    <property type="match status" value="1"/>
</dbReference>
<dbReference type="InterPro" id="IPR001448">
    <property type="entry name" value="SASP_alpha/beta-type"/>
</dbReference>
<dbReference type="InterPro" id="IPR018126">
    <property type="entry name" value="SASP_alpha/beta-type_CS"/>
</dbReference>
<dbReference type="InterPro" id="IPR038300">
    <property type="entry name" value="SASP_sf_alpha/beta"/>
</dbReference>
<dbReference type="Pfam" id="PF00269">
    <property type="entry name" value="SASP"/>
    <property type="match status" value="1"/>
</dbReference>
<dbReference type="PROSITE" id="PS00304">
    <property type="entry name" value="SASP_1"/>
    <property type="match status" value="1"/>
</dbReference>
<reference key="1">
    <citation type="journal article" date="1984" name="J. Mol. Biol.">
        <title>A promoter whose utilization is temporally regulated during sporulation in Bacillus subtilis.</title>
        <authorList>
            <person name="Stephens M.A."/>
            <person name="Lang N."/>
            <person name="Sandman K."/>
            <person name="Losick R."/>
        </authorList>
    </citation>
    <scope>NUCLEOTIDE SEQUENCE [GENOMIC DNA]</scope>
</reference>
<reference key="2">
    <citation type="journal article" date="1994" name="DNA Res.">
        <title>Systematic sequencing of the 180 kilobase region of the Bacillus subtilis chromosome containing the replication origin.</title>
        <authorList>
            <person name="Ogasawara N."/>
            <person name="Nakai S."/>
            <person name="Yoshikawa H."/>
        </authorList>
    </citation>
    <scope>NUCLEOTIDE SEQUENCE [GENOMIC DNA]</scope>
    <source>
        <strain>168</strain>
    </source>
</reference>
<reference key="3">
    <citation type="journal article" date="1997" name="Nature">
        <title>The complete genome sequence of the Gram-positive bacterium Bacillus subtilis.</title>
        <authorList>
            <person name="Kunst F."/>
            <person name="Ogasawara N."/>
            <person name="Moszer I."/>
            <person name="Albertini A.M."/>
            <person name="Alloni G."/>
            <person name="Azevedo V."/>
            <person name="Bertero M.G."/>
            <person name="Bessieres P."/>
            <person name="Bolotin A."/>
            <person name="Borchert S."/>
            <person name="Borriss R."/>
            <person name="Boursier L."/>
            <person name="Brans A."/>
            <person name="Braun M."/>
            <person name="Brignell S.C."/>
            <person name="Bron S."/>
            <person name="Brouillet S."/>
            <person name="Bruschi C.V."/>
            <person name="Caldwell B."/>
            <person name="Capuano V."/>
            <person name="Carter N.M."/>
            <person name="Choi S.-K."/>
            <person name="Codani J.-J."/>
            <person name="Connerton I.F."/>
            <person name="Cummings N.J."/>
            <person name="Daniel R.A."/>
            <person name="Denizot F."/>
            <person name="Devine K.M."/>
            <person name="Duesterhoeft A."/>
            <person name="Ehrlich S.D."/>
            <person name="Emmerson P.T."/>
            <person name="Entian K.-D."/>
            <person name="Errington J."/>
            <person name="Fabret C."/>
            <person name="Ferrari E."/>
            <person name="Foulger D."/>
            <person name="Fritz C."/>
            <person name="Fujita M."/>
            <person name="Fujita Y."/>
            <person name="Fuma S."/>
            <person name="Galizzi A."/>
            <person name="Galleron N."/>
            <person name="Ghim S.-Y."/>
            <person name="Glaser P."/>
            <person name="Goffeau A."/>
            <person name="Golightly E.J."/>
            <person name="Grandi G."/>
            <person name="Guiseppi G."/>
            <person name="Guy B.J."/>
            <person name="Haga K."/>
            <person name="Haiech J."/>
            <person name="Harwood C.R."/>
            <person name="Henaut A."/>
            <person name="Hilbert H."/>
            <person name="Holsappel S."/>
            <person name="Hosono S."/>
            <person name="Hullo M.-F."/>
            <person name="Itaya M."/>
            <person name="Jones L.-M."/>
            <person name="Joris B."/>
            <person name="Karamata D."/>
            <person name="Kasahara Y."/>
            <person name="Klaerr-Blanchard M."/>
            <person name="Klein C."/>
            <person name="Kobayashi Y."/>
            <person name="Koetter P."/>
            <person name="Koningstein G."/>
            <person name="Krogh S."/>
            <person name="Kumano M."/>
            <person name="Kurita K."/>
            <person name="Lapidus A."/>
            <person name="Lardinois S."/>
            <person name="Lauber J."/>
            <person name="Lazarevic V."/>
            <person name="Lee S.-M."/>
            <person name="Levine A."/>
            <person name="Liu H."/>
            <person name="Masuda S."/>
            <person name="Mauel C."/>
            <person name="Medigue C."/>
            <person name="Medina N."/>
            <person name="Mellado R.P."/>
            <person name="Mizuno M."/>
            <person name="Moestl D."/>
            <person name="Nakai S."/>
            <person name="Noback M."/>
            <person name="Noone D."/>
            <person name="O'Reilly M."/>
            <person name="Ogawa K."/>
            <person name="Ogiwara A."/>
            <person name="Oudega B."/>
            <person name="Park S.-H."/>
            <person name="Parro V."/>
            <person name="Pohl T.M."/>
            <person name="Portetelle D."/>
            <person name="Porwollik S."/>
            <person name="Prescott A.M."/>
            <person name="Presecan E."/>
            <person name="Pujic P."/>
            <person name="Purnelle B."/>
            <person name="Rapoport G."/>
            <person name="Rey M."/>
            <person name="Reynolds S."/>
            <person name="Rieger M."/>
            <person name="Rivolta C."/>
            <person name="Rocha E."/>
            <person name="Roche B."/>
            <person name="Rose M."/>
            <person name="Sadaie Y."/>
            <person name="Sato T."/>
            <person name="Scanlan E."/>
            <person name="Schleich S."/>
            <person name="Schroeter R."/>
            <person name="Scoffone F."/>
            <person name="Sekiguchi J."/>
            <person name="Sekowska A."/>
            <person name="Seror S.J."/>
            <person name="Serror P."/>
            <person name="Shin B.-S."/>
            <person name="Soldo B."/>
            <person name="Sorokin A."/>
            <person name="Tacconi E."/>
            <person name="Takagi T."/>
            <person name="Takahashi H."/>
            <person name="Takemaru K."/>
            <person name="Takeuchi M."/>
            <person name="Tamakoshi A."/>
            <person name="Tanaka T."/>
            <person name="Terpstra P."/>
            <person name="Tognoni A."/>
            <person name="Tosato V."/>
            <person name="Uchiyama S."/>
            <person name="Vandenbol M."/>
            <person name="Vannier F."/>
            <person name="Vassarotti A."/>
            <person name="Viari A."/>
            <person name="Wambutt R."/>
            <person name="Wedler E."/>
            <person name="Wedler H."/>
            <person name="Weitzenegger T."/>
            <person name="Winters P."/>
            <person name="Wipat A."/>
            <person name="Yamamoto H."/>
            <person name="Yamane K."/>
            <person name="Yasumoto K."/>
            <person name="Yata K."/>
            <person name="Yoshida K."/>
            <person name="Yoshikawa H.-F."/>
            <person name="Zumstein E."/>
            <person name="Yoshikawa H."/>
            <person name="Danchin A."/>
        </authorList>
    </citation>
    <scope>NUCLEOTIDE SEQUENCE [LARGE SCALE GENOMIC DNA]</scope>
    <source>
        <strain>168</strain>
    </source>
</reference>
<comment type="function">
    <text>May play some important role in either sporulation or the dormant spore.</text>
</comment>
<comment type="similarity">
    <text evidence="2">Belongs to the alpha/beta-type SASP family.</text>
</comment>
<protein>
    <recommendedName>
        <fullName>Protein SspF</fullName>
    </recommendedName>
</protein>
<evidence type="ECO:0000255" key="1"/>
<evidence type="ECO:0000305" key="2"/>
<name>SSPF_BACSU</name>
<keyword id="KW-0238">DNA-binding</keyword>
<keyword id="KW-1185">Reference proteome</keyword>
<keyword id="KW-0749">Sporulation</keyword>
<organism>
    <name type="scientific">Bacillus subtilis (strain 168)</name>
    <dbReference type="NCBI Taxonomy" id="224308"/>
    <lineage>
        <taxon>Bacteria</taxon>
        <taxon>Bacillati</taxon>
        <taxon>Bacillota</taxon>
        <taxon>Bacilli</taxon>
        <taxon>Bacillales</taxon>
        <taxon>Bacillaceae</taxon>
        <taxon>Bacillus</taxon>
    </lineage>
</organism>
<sequence>MGRRRGVMSDEFKYELAKDLGFYDTVKNGGWGEIRARDAGNMVKRAIEIAEQQMAQNQNNR</sequence>